<protein>
    <recommendedName>
        <fullName>Endogenous retrovirus group K member 8 Pol protein</fullName>
    </recommendedName>
    <alternativeName>
        <fullName>HERV-K115 Pol protein</fullName>
    </alternativeName>
    <alternativeName>
        <fullName>HERV-K_8p23.1 provirus ancestral Pol protein</fullName>
    </alternativeName>
    <domain>
        <recommendedName>
            <fullName>Reverse transcriptase</fullName>
            <shortName>RT</shortName>
            <ecNumber>2.7.7.49</ecNumber>
        </recommendedName>
    </domain>
    <domain>
        <recommendedName>
            <fullName>Ribonuclease H</fullName>
            <shortName>RNase H</shortName>
            <ecNumber>3.1.26.4</ecNumber>
        </recommendedName>
    </domain>
    <domain>
        <recommendedName>
            <fullName>Integrase</fullName>
            <shortName>IN</shortName>
        </recommendedName>
    </domain>
</protein>
<accession>P63133</accession>
<gene>
    <name type="primary">ERVK-8</name>
</gene>
<keyword id="KW-0229">DNA integration</keyword>
<keyword id="KW-0233">DNA recombination</keyword>
<keyword id="KW-0238">DNA-binding</keyword>
<keyword id="KW-0255">Endonuclease</keyword>
<keyword id="KW-0895">ERV</keyword>
<keyword id="KW-0378">Hydrolase</keyword>
<keyword id="KW-0479">Metal-binding</keyword>
<keyword id="KW-0511">Multifunctional enzyme</keyword>
<keyword id="KW-0540">Nuclease</keyword>
<keyword id="KW-0548">Nucleotidyltransferase</keyword>
<keyword id="KW-1185">Reference proteome</keyword>
<keyword id="KW-0695">RNA-directed DNA polymerase</keyword>
<keyword id="KW-0808">Transferase</keyword>
<keyword id="KW-0814">Transposable element</keyword>
<keyword id="KW-0862">Zinc</keyword>
<keyword id="KW-0863">Zinc-finger</keyword>
<dbReference type="EC" id="2.7.7.49"/>
<dbReference type="EC" id="3.1.26.4"/>
<dbReference type="EMBL" id="AC134684">
    <property type="status" value="NOT_ANNOTATED_CDS"/>
    <property type="molecule type" value="Genomic_DNA"/>
</dbReference>
<dbReference type="SMR" id="P63133"/>
<dbReference type="FunCoup" id="P63133">
    <property type="interactions" value="8"/>
</dbReference>
<dbReference type="GlyGen" id="P63133">
    <property type="glycosylation" value="1 site"/>
</dbReference>
<dbReference type="BioMuta" id="HGNC:32302"/>
<dbReference type="DMDM" id="52000771"/>
<dbReference type="MassIVE" id="P63133"/>
<dbReference type="PeptideAtlas" id="P63133"/>
<dbReference type="GeneCards" id="ERVK-8"/>
<dbReference type="HGNC" id="HGNC:32302">
    <property type="gene designation" value="ERVK-8"/>
</dbReference>
<dbReference type="neXtProt" id="NX_P63133"/>
<dbReference type="InParanoid" id="P63133"/>
<dbReference type="PAN-GO" id="P63133">
    <property type="GO annotations" value="1 GO annotation based on evolutionary models"/>
</dbReference>
<dbReference type="PhylomeDB" id="P63133"/>
<dbReference type="Pharos" id="P63133">
    <property type="development level" value="Tdark"/>
</dbReference>
<dbReference type="Proteomes" id="UP000005640">
    <property type="component" value="Unplaced"/>
</dbReference>
<dbReference type="RNAct" id="P63133">
    <property type="molecule type" value="protein"/>
</dbReference>
<dbReference type="GO" id="GO:0003677">
    <property type="term" value="F:DNA binding"/>
    <property type="evidence" value="ECO:0007669"/>
    <property type="project" value="UniProtKB-KW"/>
</dbReference>
<dbReference type="GO" id="GO:0035613">
    <property type="term" value="F:RNA stem-loop binding"/>
    <property type="evidence" value="ECO:0000318"/>
    <property type="project" value="GO_Central"/>
</dbReference>
<dbReference type="GO" id="GO:0003964">
    <property type="term" value="F:RNA-directed DNA polymerase activity"/>
    <property type="evidence" value="ECO:0007669"/>
    <property type="project" value="UniProtKB-KW"/>
</dbReference>
<dbReference type="GO" id="GO:0004523">
    <property type="term" value="F:RNA-DNA hybrid ribonuclease activity"/>
    <property type="evidence" value="ECO:0007669"/>
    <property type="project" value="UniProtKB-EC"/>
</dbReference>
<dbReference type="GO" id="GO:0008270">
    <property type="term" value="F:zinc ion binding"/>
    <property type="evidence" value="ECO:0007669"/>
    <property type="project" value="UniProtKB-KW"/>
</dbReference>
<dbReference type="GO" id="GO:0015074">
    <property type="term" value="P:DNA integration"/>
    <property type="evidence" value="ECO:0007669"/>
    <property type="project" value="UniProtKB-KW"/>
</dbReference>
<dbReference type="GO" id="GO:0006310">
    <property type="term" value="P:DNA recombination"/>
    <property type="evidence" value="ECO:0007669"/>
    <property type="project" value="UniProtKB-KW"/>
</dbReference>
<dbReference type="GO" id="GO:0000731">
    <property type="term" value="P:DNA synthesis involved in DNA repair"/>
    <property type="evidence" value="ECO:0007669"/>
    <property type="project" value="UniProtKB-ARBA"/>
</dbReference>
<dbReference type="GO" id="GO:0006261">
    <property type="term" value="P:DNA-templated DNA replication"/>
    <property type="evidence" value="ECO:0007669"/>
    <property type="project" value="UniProtKB-ARBA"/>
</dbReference>
<dbReference type="CDD" id="cd09273">
    <property type="entry name" value="RNase_HI_RT_Bel"/>
    <property type="match status" value="1"/>
</dbReference>
<dbReference type="CDD" id="cd01645">
    <property type="entry name" value="RT_Rtv"/>
    <property type="match status" value="1"/>
</dbReference>
<dbReference type="FunFam" id="3.30.70.270:FF:000085">
    <property type="entry name" value="Endogenous retrovirus group K member 10 Pol protein"/>
    <property type="match status" value="1"/>
</dbReference>
<dbReference type="FunFam" id="3.30.420.10:FF:000145">
    <property type="entry name" value="Endogenous retrovirus group K member 18 Pol protein"/>
    <property type="match status" value="1"/>
</dbReference>
<dbReference type="FunFam" id="3.30.420.10:FF:000146">
    <property type="entry name" value="Endogenous retrovirus group K member 6 Pol protein"/>
    <property type="match status" value="1"/>
</dbReference>
<dbReference type="Gene3D" id="1.10.10.200">
    <property type="match status" value="1"/>
</dbReference>
<dbReference type="Gene3D" id="3.30.70.270">
    <property type="match status" value="2"/>
</dbReference>
<dbReference type="Gene3D" id="3.10.10.10">
    <property type="entry name" value="HIV Type 1 Reverse Transcriptase, subunit A, domain 1"/>
    <property type="match status" value="1"/>
</dbReference>
<dbReference type="Gene3D" id="2.30.30.10">
    <property type="entry name" value="Integrase, C-terminal domain superfamily, retroviral"/>
    <property type="match status" value="1"/>
</dbReference>
<dbReference type="Gene3D" id="3.30.420.10">
    <property type="entry name" value="Ribonuclease H-like superfamily/Ribonuclease H"/>
    <property type="match status" value="2"/>
</dbReference>
<dbReference type="InterPro" id="IPR043502">
    <property type="entry name" value="DNA/RNA_pol_sf"/>
</dbReference>
<dbReference type="InterPro" id="IPR017856">
    <property type="entry name" value="Integrase-like_N"/>
</dbReference>
<dbReference type="InterPro" id="IPR036862">
    <property type="entry name" value="Integrase_C_dom_sf_retrovir"/>
</dbReference>
<dbReference type="InterPro" id="IPR001037">
    <property type="entry name" value="Integrase_C_retrovir"/>
</dbReference>
<dbReference type="InterPro" id="IPR001584">
    <property type="entry name" value="Integrase_cat-core"/>
</dbReference>
<dbReference type="InterPro" id="IPR003308">
    <property type="entry name" value="Integrase_Zn-bd_dom_N"/>
</dbReference>
<dbReference type="InterPro" id="IPR043128">
    <property type="entry name" value="Rev_trsase/Diguanyl_cyclase"/>
</dbReference>
<dbReference type="InterPro" id="IPR012337">
    <property type="entry name" value="RNaseH-like_sf"/>
</dbReference>
<dbReference type="InterPro" id="IPR002156">
    <property type="entry name" value="RNaseH_domain"/>
</dbReference>
<dbReference type="InterPro" id="IPR036397">
    <property type="entry name" value="RNaseH_sf"/>
</dbReference>
<dbReference type="InterPro" id="IPR000477">
    <property type="entry name" value="RT_dom"/>
</dbReference>
<dbReference type="InterPro" id="IPR010661">
    <property type="entry name" value="RVT_thumb"/>
</dbReference>
<dbReference type="PANTHER" id="PTHR41694:SF4">
    <property type="entry name" value="ENDOGENOUS RETROVIRUS GROUP K MEMBER 10 POL PROTEIN-RELATED"/>
    <property type="match status" value="1"/>
</dbReference>
<dbReference type="PANTHER" id="PTHR41694">
    <property type="entry name" value="ENDOGENOUS RETROVIRUS GROUP K MEMBER POL PROTEIN"/>
    <property type="match status" value="1"/>
</dbReference>
<dbReference type="Pfam" id="PF00552">
    <property type="entry name" value="IN_DBD_C"/>
    <property type="match status" value="1"/>
</dbReference>
<dbReference type="Pfam" id="PF02022">
    <property type="entry name" value="Integrase_Zn"/>
    <property type="match status" value="1"/>
</dbReference>
<dbReference type="Pfam" id="PF00075">
    <property type="entry name" value="RNase_H"/>
    <property type="match status" value="1"/>
</dbReference>
<dbReference type="Pfam" id="PF00665">
    <property type="entry name" value="rve"/>
    <property type="match status" value="1"/>
</dbReference>
<dbReference type="Pfam" id="PF00078">
    <property type="entry name" value="RVT_1"/>
    <property type="match status" value="1"/>
</dbReference>
<dbReference type="Pfam" id="PF06817">
    <property type="entry name" value="RVT_thumb"/>
    <property type="match status" value="1"/>
</dbReference>
<dbReference type="SUPFAM" id="SSF50122">
    <property type="entry name" value="DNA-binding domain of retroviral integrase"/>
    <property type="match status" value="1"/>
</dbReference>
<dbReference type="SUPFAM" id="SSF56672">
    <property type="entry name" value="DNA/RNA polymerases"/>
    <property type="match status" value="1"/>
</dbReference>
<dbReference type="SUPFAM" id="SSF46919">
    <property type="entry name" value="N-terminal Zn binding domain of HIV integrase"/>
    <property type="match status" value="1"/>
</dbReference>
<dbReference type="SUPFAM" id="SSF53098">
    <property type="entry name" value="Ribonuclease H-like"/>
    <property type="match status" value="2"/>
</dbReference>
<dbReference type="PROSITE" id="PS50994">
    <property type="entry name" value="INTEGRASE"/>
    <property type="match status" value="1"/>
</dbReference>
<dbReference type="PROSITE" id="PS51027">
    <property type="entry name" value="INTEGRASE_DBD"/>
    <property type="match status" value="1"/>
</dbReference>
<dbReference type="PROSITE" id="PS50879">
    <property type="entry name" value="RNASE_H_1"/>
    <property type="match status" value="1"/>
</dbReference>
<dbReference type="PROSITE" id="PS50878">
    <property type="entry name" value="RT_POL"/>
    <property type="match status" value="1"/>
</dbReference>
<dbReference type="PROSITE" id="PS50876">
    <property type="entry name" value="ZF_INTEGRASE"/>
    <property type="match status" value="1"/>
</dbReference>
<proteinExistence type="inferred from homology"/>
<comment type="function">
    <text>Early post-infection, the reverse transcriptase converts the viral RNA genome into double-stranded viral DNA. The RNase H domain of the reverse transcriptase performs two functions. It degrades the RNA template and specifically removes the RNA primer from the RNA/DNA hybrid. Following nuclear import, the integrase catalyzes the insertion of the linear, double-stranded viral DNA into the host cell chromosome. Endogenous Pol proteins may have kept, lost or modified their original function during evolution.</text>
</comment>
<comment type="catalytic activity">
    <reaction evidence="1">
        <text>DNA(n) + a 2'-deoxyribonucleoside 5'-triphosphate = DNA(n+1) + diphosphate</text>
        <dbReference type="Rhea" id="RHEA:22508"/>
        <dbReference type="Rhea" id="RHEA-COMP:17339"/>
        <dbReference type="Rhea" id="RHEA-COMP:17340"/>
        <dbReference type="ChEBI" id="CHEBI:33019"/>
        <dbReference type="ChEBI" id="CHEBI:61560"/>
        <dbReference type="ChEBI" id="CHEBI:173112"/>
        <dbReference type="EC" id="2.7.7.49"/>
    </reaction>
</comment>
<comment type="catalytic activity">
    <reaction evidence="2">
        <text>Endonucleolytic cleavage to 5'-phosphomonoester.</text>
        <dbReference type="EC" id="3.1.26.4"/>
    </reaction>
</comment>
<comment type="domain">
    <text>The LPQG and YXDD motifs are catalytically important and conserved among many retroviruses.</text>
</comment>
<comment type="miscellaneous">
    <text>This protein is synthesized as Gag-Pro and Gag-Pro-Pol polyprotein precursors. These polyproteins are thought, by similarity with type-B retroviruses, to be generated by -1 frameshifts occurring at the Gag-Pro and Pro-Pol genes boundaries.</text>
</comment>
<comment type="miscellaneous">
    <text>Exact N-terminus of this protein has not been formally described.</text>
</comment>
<comment type="miscellaneous">
    <text>Insertional polymorphism. Provirus present in 16% of tested individuals.</text>
</comment>
<comment type="miscellaneous">
    <text>Intragenic, in first intron of DEFB107 gene.</text>
</comment>
<comment type="similarity">
    <text evidence="7">Belongs to the beta type-B retroviral polymerase family. HERV class-II K(HML-2) pol subfamily.</text>
</comment>
<evidence type="ECO:0000255" key="1">
    <source>
        <dbReference type="PROSITE-ProRule" id="PRU00405"/>
    </source>
</evidence>
<evidence type="ECO:0000255" key="2">
    <source>
        <dbReference type="PROSITE-ProRule" id="PRU00408"/>
    </source>
</evidence>
<evidence type="ECO:0000255" key="3">
    <source>
        <dbReference type="PROSITE-ProRule" id="PRU00450"/>
    </source>
</evidence>
<evidence type="ECO:0000255" key="4">
    <source>
        <dbReference type="PROSITE-ProRule" id="PRU00457"/>
    </source>
</evidence>
<evidence type="ECO:0000255" key="5">
    <source>
        <dbReference type="PROSITE-ProRule" id="PRU00506"/>
    </source>
</evidence>
<evidence type="ECO:0000256" key="6">
    <source>
        <dbReference type="SAM" id="MobiDB-lite"/>
    </source>
</evidence>
<evidence type="ECO:0000305" key="7"/>
<name>POK8_HUMAN</name>
<sequence length="956" mass="107703">NKSKKRRNRVSFLGVATIEPPKPIPLTWKTEKLVWVNQWPLPKQKLEALHLLANEQLEKGHIEPSFSPWNSPVFVIQKKSGKWRMLTDLRAVNAVIQPMGPLQPGLPSPAMIPKDWPLIIIDLKDCFFTIPLAEQDCEKFAFTIPAINNKEPATRFQWKVLPQGMLNSPTICQTFVGRALQPVRKKFSDCYIIHYIDDILCAAETKDKLIDCYTFLQAEVASAGLAIASDKIQTSTPFHYLGMQIENRKIKPQKIEIRKDTLKTLNDFQKLLGDINWIQPTLGIPTYAMSNLFSILRGDSDLNSKRILTPEATKEIKLVEEKIQSAQINRIDPLAPLQLLIFATAHSPTGIIIQNTDLVEWSFLPHSTVKTFTLYLDQIATLIGQTRLRIIKLCGNDPDKIVVPLTKEQVRQAFINSGAWQIGLANFVGIIDNHYPKTKIFQFLKLTTWILPKITRREPLENALTVFTDGSSNGKAAYTGPKERVIKTPYQSAQRAELVAVITVLQDFDQPINIISDSAYVVQATRVVETALIKYSMDDQLNQLFNLLQQTVRKRNFPFYITHIRAHTNLPGPLTKANEQADLLVSSALIKAQELHALTHVNAAGLKNKFDVTWKQAKDIVQHCTQCQVLHLPTQEAGVNPRGLCPNALWQMDVTHVPSFGRLSYVHVTVDTYSHFIWATCQTGESTSHVKKHLLSCFAVMGVPEKIKTDNGPGYCSKAFQKFLSQWKISHTTGIPYNSQGQAIVERTNRTLKTQLVKQKEGGDSKECTTPQMQLNLALYTLNFLNIYRNQTTTSAEQHLTGKKNSPHEGKLIWWKDNKNKTWEIGKVITWGRGFACVSPGENQLPVWIPTRHLKFYNEPIRDAKKSTSAETETPQSSTVDSQDEQNGDVRRTDEVAIHQEGRAADLGTTKEADAVSYKISREHKGDTNPREYAACSLDDCINGGKSPYACRSSCS</sequence>
<organism>
    <name type="scientific">Homo sapiens</name>
    <name type="common">Human</name>
    <dbReference type="NCBI Taxonomy" id="9606"/>
    <lineage>
        <taxon>Eukaryota</taxon>
        <taxon>Metazoa</taxon>
        <taxon>Chordata</taxon>
        <taxon>Craniata</taxon>
        <taxon>Vertebrata</taxon>
        <taxon>Euteleostomi</taxon>
        <taxon>Mammalia</taxon>
        <taxon>Eutheria</taxon>
        <taxon>Euarchontoglires</taxon>
        <taxon>Primates</taxon>
        <taxon>Haplorrhini</taxon>
        <taxon>Catarrhini</taxon>
        <taxon>Hominidae</taxon>
        <taxon>Homo</taxon>
    </lineage>
</organism>
<reference key="1">
    <citation type="journal article" date="2006" name="Nature">
        <title>DNA sequence and analysis of human chromosome 8.</title>
        <authorList>
            <person name="Nusbaum C."/>
            <person name="Mikkelsen T.S."/>
            <person name="Zody M.C."/>
            <person name="Asakawa S."/>
            <person name="Taudien S."/>
            <person name="Garber M."/>
            <person name="Kodira C.D."/>
            <person name="Schueler M.G."/>
            <person name="Shimizu A."/>
            <person name="Whittaker C.A."/>
            <person name="Chang J.L."/>
            <person name="Cuomo C.A."/>
            <person name="Dewar K."/>
            <person name="FitzGerald M.G."/>
            <person name="Yang X."/>
            <person name="Allen N.R."/>
            <person name="Anderson S."/>
            <person name="Asakawa T."/>
            <person name="Blechschmidt K."/>
            <person name="Bloom T."/>
            <person name="Borowsky M.L."/>
            <person name="Butler J."/>
            <person name="Cook A."/>
            <person name="Corum B."/>
            <person name="DeArellano K."/>
            <person name="DeCaprio D."/>
            <person name="Dooley K.T."/>
            <person name="Dorris L. III"/>
            <person name="Engels R."/>
            <person name="Gloeckner G."/>
            <person name="Hafez N."/>
            <person name="Hagopian D.S."/>
            <person name="Hall J.L."/>
            <person name="Ishikawa S.K."/>
            <person name="Jaffe D.B."/>
            <person name="Kamat A."/>
            <person name="Kudoh J."/>
            <person name="Lehmann R."/>
            <person name="Lokitsang T."/>
            <person name="Macdonald P."/>
            <person name="Major J.E."/>
            <person name="Matthews C.D."/>
            <person name="Mauceli E."/>
            <person name="Menzel U."/>
            <person name="Mihalev A.H."/>
            <person name="Minoshima S."/>
            <person name="Murayama Y."/>
            <person name="Naylor J.W."/>
            <person name="Nicol R."/>
            <person name="Nguyen C."/>
            <person name="O'Leary S.B."/>
            <person name="O'Neill K."/>
            <person name="Parker S.C.J."/>
            <person name="Polley A."/>
            <person name="Raymond C.K."/>
            <person name="Reichwald K."/>
            <person name="Rodriguez J."/>
            <person name="Sasaki T."/>
            <person name="Schilhabel M."/>
            <person name="Siddiqui R."/>
            <person name="Smith C.L."/>
            <person name="Sneddon T.P."/>
            <person name="Talamas J.A."/>
            <person name="Tenzin P."/>
            <person name="Topham K."/>
            <person name="Venkataraman V."/>
            <person name="Wen G."/>
            <person name="Yamazaki S."/>
            <person name="Young S.K."/>
            <person name="Zeng Q."/>
            <person name="Zimmer A.R."/>
            <person name="Rosenthal A."/>
            <person name="Birren B.W."/>
            <person name="Platzer M."/>
            <person name="Shimizu N."/>
            <person name="Lander E.S."/>
        </authorList>
    </citation>
    <scope>NUCLEOTIDE SEQUENCE [LARGE SCALE GENOMIC DNA]</scope>
</reference>
<reference key="2">
    <citation type="journal article" date="2001" name="Curr. Biol.">
        <title>Insertional polymorphisms of full-length endogenous retroviruses in humans.</title>
        <authorList>
            <person name="Turner G."/>
            <person name="Barbulescu M."/>
            <person name="Su M."/>
            <person name="Jensen-Seaman M.I."/>
            <person name="Kidd K.K."/>
            <person name="Lenz J."/>
        </authorList>
    </citation>
    <scope>IDENTIFICATION</scope>
</reference>
<feature type="chain" id="PRO_0000186766" description="Endogenous retrovirus group K member 8 Pol protein">
    <location>
        <begin position="1"/>
        <end position="956"/>
    </location>
</feature>
<feature type="domain" description="Reverse transcriptase" evidence="1">
    <location>
        <begin position="57"/>
        <end position="245"/>
    </location>
</feature>
<feature type="domain" description="RNase H type-1" evidence="2">
    <location>
        <begin position="460"/>
        <end position="590"/>
    </location>
</feature>
<feature type="domain" description="Integrase catalytic" evidence="4">
    <location>
        <begin position="642"/>
        <end position="803"/>
    </location>
</feature>
<feature type="zinc finger region" description="Integrase-type" evidence="3">
    <location>
        <begin position="587"/>
        <end position="628"/>
    </location>
</feature>
<feature type="DNA-binding region" description="Integrase-type" evidence="5">
    <location>
        <begin position="811"/>
        <end position="859"/>
    </location>
</feature>
<feature type="region of interest" description="Disordered" evidence="6">
    <location>
        <begin position="864"/>
        <end position="890"/>
    </location>
</feature>
<feature type="short sequence motif" description="LPQG">
    <location>
        <begin position="161"/>
        <end position="164"/>
    </location>
</feature>
<feature type="short sequence motif" description="YXDD">
    <location>
        <begin position="195"/>
        <end position="198"/>
    </location>
</feature>
<feature type="compositionally biased region" description="Polar residues" evidence="6">
    <location>
        <begin position="869"/>
        <end position="881"/>
    </location>
</feature>
<feature type="binding site" evidence="2">
    <location>
        <position position="469"/>
    </location>
    <ligand>
        <name>Mg(2+)</name>
        <dbReference type="ChEBI" id="CHEBI:18420"/>
        <label>1</label>
    </ligand>
</feature>
<feature type="binding site" evidence="2">
    <location>
        <position position="469"/>
    </location>
    <ligand>
        <name>Mg(2+)</name>
        <dbReference type="ChEBI" id="CHEBI:18420"/>
        <label>2</label>
    </ligand>
</feature>
<feature type="binding site" evidence="2">
    <location>
        <position position="497"/>
    </location>
    <ligand>
        <name>Mg(2+)</name>
        <dbReference type="ChEBI" id="CHEBI:18420"/>
        <label>1</label>
    </ligand>
</feature>
<feature type="binding site" evidence="2">
    <location>
        <position position="517"/>
    </location>
    <ligand>
        <name>Mg(2+)</name>
        <dbReference type="ChEBI" id="CHEBI:18420"/>
        <label>1</label>
    </ligand>
</feature>
<feature type="binding site" evidence="2">
    <location>
        <position position="582"/>
    </location>
    <ligand>
        <name>Mg(2+)</name>
        <dbReference type="ChEBI" id="CHEBI:18420"/>
        <label>2</label>
    </ligand>
</feature>
<feature type="binding site" evidence="3">
    <location>
        <position position="596"/>
    </location>
    <ligand>
        <name>Zn(2+)</name>
        <dbReference type="ChEBI" id="CHEBI:29105"/>
    </ligand>
</feature>
<feature type="binding site" evidence="3">
    <location>
        <position position="600"/>
    </location>
    <ligand>
        <name>Zn(2+)</name>
        <dbReference type="ChEBI" id="CHEBI:29105"/>
    </ligand>
</feature>
<feature type="binding site" evidence="3">
    <location>
        <position position="624"/>
    </location>
    <ligand>
        <name>Zn(2+)</name>
        <dbReference type="ChEBI" id="CHEBI:29105"/>
    </ligand>
</feature>
<feature type="binding site" evidence="3">
    <location>
        <position position="627"/>
    </location>
    <ligand>
        <name>Zn(2+)</name>
        <dbReference type="ChEBI" id="CHEBI:29105"/>
    </ligand>
</feature>